<feature type="chain" id="PRO_0000207900" description="Protein PsbN">
    <location>
        <begin position="1"/>
        <end position="43"/>
    </location>
</feature>
<feature type="transmembrane region" description="Helical" evidence="1">
    <location>
        <begin position="7"/>
        <end position="24"/>
    </location>
</feature>
<evidence type="ECO:0000255" key="1">
    <source>
        <dbReference type="HAMAP-Rule" id="MF_00293"/>
    </source>
</evidence>
<organism>
    <name type="scientific">Ginkgo biloba</name>
    <name type="common">Ginkgo</name>
    <name type="synonym">Maidenhair tree</name>
    <dbReference type="NCBI Taxonomy" id="3311"/>
    <lineage>
        <taxon>Eukaryota</taxon>
        <taxon>Viridiplantae</taxon>
        <taxon>Streptophyta</taxon>
        <taxon>Embryophyta</taxon>
        <taxon>Tracheophyta</taxon>
        <taxon>Spermatophyta</taxon>
        <taxon>Ginkgoidae</taxon>
        <taxon>Ginkgoales</taxon>
        <taxon>Ginkgoaceae</taxon>
        <taxon>Ginkgo</taxon>
    </lineage>
</organism>
<gene>
    <name evidence="1" type="primary">psbN</name>
</gene>
<accession>Q9GF86</accession>
<proteinExistence type="inferred from homology"/>
<reference key="1">
    <citation type="journal article" date="2000" name="Am. J. Bot.">
        <title>Utility of 17 chloroplast genes for inferring the phylogeny of the basal angiosperms.</title>
        <authorList>
            <person name="Graham S.W."/>
            <person name="Olmstead R.G."/>
        </authorList>
    </citation>
    <scope>NUCLEOTIDE SEQUENCE [GENOMIC DNA]</scope>
</reference>
<name>PSBN_GINBI</name>
<geneLocation type="chloroplast"/>
<comment type="function">
    <text evidence="1">May play a role in photosystem I and II biogenesis.</text>
</comment>
<comment type="subcellular location">
    <subcellularLocation>
        <location evidence="1">Plastid</location>
        <location evidence="1">Chloroplast thylakoid membrane</location>
        <topology evidence="1">Single-pass membrane protein</topology>
    </subcellularLocation>
</comment>
<comment type="similarity">
    <text evidence="1">Belongs to the PsbN family.</text>
</comment>
<comment type="caution">
    <text evidence="1">Originally thought to be a component of PSII; based on experiments in Synechocystis, N.tabacum and barley, and its absence from PSII in T.elongatus and T.vulcanus, this is probably not true.</text>
</comment>
<dbReference type="EMBL" id="AF123851">
    <property type="protein sequence ID" value="AAG26283.1"/>
    <property type="molecule type" value="Genomic_DNA"/>
</dbReference>
<dbReference type="RefSeq" id="YP_005352735.1">
    <property type="nucleotide sequence ID" value="NC_016986.1"/>
</dbReference>
<dbReference type="GeneID" id="11935035"/>
<dbReference type="GO" id="GO:0009535">
    <property type="term" value="C:chloroplast thylakoid membrane"/>
    <property type="evidence" value="ECO:0007669"/>
    <property type="project" value="UniProtKB-SubCell"/>
</dbReference>
<dbReference type="GO" id="GO:0015979">
    <property type="term" value="P:photosynthesis"/>
    <property type="evidence" value="ECO:0007669"/>
    <property type="project" value="InterPro"/>
</dbReference>
<dbReference type="HAMAP" id="MF_00293">
    <property type="entry name" value="PSII_PsbN"/>
    <property type="match status" value="1"/>
</dbReference>
<dbReference type="InterPro" id="IPR003398">
    <property type="entry name" value="PSII_PsbN"/>
</dbReference>
<dbReference type="PANTHER" id="PTHR35326">
    <property type="entry name" value="PROTEIN PSBN"/>
    <property type="match status" value="1"/>
</dbReference>
<dbReference type="PANTHER" id="PTHR35326:SF3">
    <property type="entry name" value="PROTEIN PSBN"/>
    <property type="match status" value="1"/>
</dbReference>
<dbReference type="Pfam" id="PF02468">
    <property type="entry name" value="PsbN"/>
    <property type="match status" value="1"/>
</dbReference>
<keyword id="KW-0150">Chloroplast</keyword>
<keyword id="KW-0472">Membrane</keyword>
<keyword id="KW-0934">Plastid</keyword>
<keyword id="KW-0793">Thylakoid</keyword>
<keyword id="KW-0812">Transmembrane</keyword>
<keyword id="KW-1133">Transmembrane helix</keyword>
<sequence>METATLVAISISRSLVSFTGYALYTAFGQPSEQLRDPFEEHED</sequence>
<protein>
    <recommendedName>
        <fullName evidence="1">Protein PsbN</fullName>
    </recommendedName>
</protein>